<name>YORE_PSECL</name>
<sequence length="255" mass="28906">MLFFSRTTRWVLAPLADRLDQPDQACTPLSSNNPLLRRILTGVEQLLQERSALKEQARALTQEVTQLDERVACRDALLRQWEARWALVSHGAGELFWELEVNGTAAPSLACAMRWTGSASILAPGIDQLGHWNEQLHPADRQRHLDTLARHLADRSGRTPFVLDVRIQPPSGDDYRWCRISGDSRRDAQGLPVAMGGSLRDIHQQHLQDEVLELAATRFDISREMLHDGLWDIEVVAGDPANPKNTIWWSSQMRR</sequence>
<accession>Q03003</accession>
<feature type="chain" id="PRO_0000066379" description="Uncharacterized protein in P47K 3'region">
    <location>
        <begin position="1"/>
        <end position="255" status="greater than"/>
    </location>
</feature>
<feature type="non-terminal residue">
    <location>
        <position position="255"/>
    </location>
</feature>
<organism>
    <name type="scientific">Pseudomonas chlororaphis</name>
    <name type="common">Pseudomonas aureofaciens</name>
    <dbReference type="NCBI Taxonomy" id="333"/>
    <lineage>
        <taxon>Bacteria</taxon>
        <taxon>Pseudomonadati</taxon>
        <taxon>Pseudomonadota</taxon>
        <taxon>Gammaproteobacteria</taxon>
        <taxon>Pseudomonadales</taxon>
        <taxon>Pseudomonadaceae</taxon>
        <taxon>Pseudomonas</taxon>
    </lineage>
</organism>
<dbReference type="EMBL" id="D90216">
    <property type="protein sequence ID" value="BAA14248.1"/>
    <property type="molecule type" value="Genomic_DNA"/>
</dbReference>
<dbReference type="PIR" id="E42725">
    <property type="entry name" value="E42725"/>
</dbReference>
<dbReference type="SMR" id="Q03003"/>
<dbReference type="CDD" id="cd00130">
    <property type="entry name" value="PAS"/>
    <property type="match status" value="1"/>
</dbReference>
<dbReference type="Gene3D" id="3.30.450.20">
    <property type="entry name" value="PAS domain"/>
    <property type="match status" value="1"/>
</dbReference>
<dbReference type="InterPro" id="IPR001610">
    <property type="entry name" value="PAC"/>
</dbReference>
<dbReference type="InterPro" id="IPR000014">
    <property type="entry name" value="PAS"/>
</dbReference>
<dbReference type="InterPro" id="IPR035965">
    <property type="entry name" value="PAS-like_dom_sf"/>
</dbReference>
<dbReference type="InterPro" id="IPR013655">
    <property type="entry name" value="PAS_fold_3"/>
</dbReference>
<dbReference type="Pfam" id="PF08447">
    <property type="entry name" value="PAS_3"/>
    <property type="match status" value="1"/>
</dbReference>
<dbReference type="SMART" id="SM00086">
    <property type="entry name" value="PAC"/>
    <property type="match status" value="1"/>
</dbReference>
<dbReference type="SUPFAM" id="SSF55785">
    <property type="entry name" value="PYP-like sensor domain (PAS domain)"/>
    <property type="match status" value="1"/>
</dbReference>
<protein>
    <recommendedName>
        <fullName>Uncharacterized protein in P47K 3'region</fullName>
    </recommendedName>
    <alternativeName>
        <fullName>ORFE</fullName>
    </alternativeName>
</protein>
<proteinExistence type="predicted"/>
<reference key="1">
    <citation type="journal article" date="1991" name="J. Bacteriol.">
        <title>Cloning and characterization of genes responsible for metabolism of nitrile compounds from Pseudomonas chlororaphis B23.</title>
        <authorList>
            <person name="Nishiyama M."/>
            <person name="Horinouchi S."/>
            <person name="Kobayashi M."/>
            <person name="Nagasawa T."/>
            <person name="Yamada H."/>
            <person name="Beppu T."/>
        </authorList>
    </citation>
    <scope>NUCLEOTIDE SEQUENCE [GENOMIC DNA]</scope>
    <source>
        <strain>B23</strain>
    </source>
</reference>